<keyword id="KW-0067">ATP-binding</keyword>
<keyword id="KW-0963">Cytoplasm</keyword>
<keyword id="KW-1015">Disulfide bond</keyword>
<keyword id="KW-0547">Nucleotide-binding</keyword>
<keyword id="KW-0694">RNA-binding</keyword>
<keyword id="KW-0808">Transferase</keyword>
<keyword id="KW-0819">tRNA processing</keyword>
<keyword id="KW-0820">tRNA-binding</keyword>
<name>MNMA_CERSK</name>
<protein>
    <recommendedName>
        <fullName evidence="1">tRNA-specific 2-thiouridylase MnmA</fullName>
        <ecNumber evidence="1">2.8.1.13</ecNumber>
    </recommendedName>
</protein>
<comment type="function">
    <text evidence="1">Catalyzes the 2-thiolation of uridine at the wobble position (U34) of tRNA, leading to the formation of s(2)U34.</text>
</comment>
<comment type="catalytic activity">
    <reaction evidence="1">
        <text>S-sulfanyl-L-cysteinyl-[protein] + uridine(34) in tRNA + AH2 + ATP = 2-thiouridine(34) in tRNA + L-cysteinyl-[protein] + A + AMP + diphosphate + H(+)</text>
        <dbReference type="Rhea" id="RHEA:47032"/>
        <dbReference type="Rhea" id="RHEA-COMP:10131"/>
        <dbReference type="Rhea" id="RHEA-COMP:11726"/>
        <dbReference type="Rhea" id="RHEA-COMP:11727"/>
        <dbReference type="Rhea" id="RHEA-COMP:11728"/>
        <dbReference type="ChEBI" id="CHEBI:13193"/>
        <dbReference type="ChEBI" id="CHEBI:15378"/>
        <dbReference type="ChEBI" id="CHEBI:17499"/>
        <dbReference type="ChEBI" id="CHEBI:29950"/>
        <dbReference type="ChEBI" id="CHEBI:30616"/>
        <dbReference type="ChEBI" id="CHEBI:33019"/>
        <dbReference type="ChEBI" id="CHEBI:61963"/>
        <dbReference type="ChEBI" id="CHEBI:65315"/>
        <dbReference type="ChEBI" id="CHEBI:87170"/>
        <dbReference type="ChEBI" id="CHEBI:456215"/>
        <dbReference type="EC" id="2.8.1.13"/>
    </reaction>
</comment>
<comment type="subcellular location">
    <subcellularLocation>
        <location evidence="1">Cytoplasm</location>
    </subcellularLocation>
</comment>
<comment type="similarity">
    <text evidence="1">Belongs to the MnmA/TRMU family.</text>
</comment>
<dbReference type="EC" id="2.8.1.13" evidence="1"/>
<dbReference type="EMBL" id="CP001150">
    <property type="protein sequence ID" value="ACM00791.1"/>
    <property type="molecule type" value="Genomic_DNA"/>
</dbReference>
<dbReference type="RefSeq" id="WP_015920403.1">
    <property type="nucleotide sequence ID" value="NC_011963.1"/>
</dbReference>
<dbReference type="SMR" id="B9KR64"/>
<dbReference type="GeneID" id="67446371"/>
<dbReference type="KEGG" id="rsk:RSKD131_0931"/>
<dbReference type="HOGENOM" id="CLU_035188_0_0_5"/>
<dbReference type="GO" id="GO:0005737">
    <property type="term" value="C:cytoplasm"/>
    <property type="evidence" value="ECO:0007669"/>
    <property type="project" value="UniProtKB-SubCell"/>
</dbReference>
<dbReference type="GO" id="GO:0005524">
    <property type="term" value="F:ATP binding"/>
    <property type="evidence" value="ECO:0007669"/>
    <property type="project" value="UniProtKB-KW"/>
</dbReference>
<dbReference type="GO" id="GO:0000049">
    <property type="term" value="F:tRNA binding"/>
    <property type="evidence" value="ECO:0007669"/>
    <property type="project" value="UniProtKB-KW"/>
</dbReference>
<dbReference type="GO" id="GO:0103016">
    <property type="term" value="F:tRNA-uridine 2-sulfurtransferase activity"/>
    <property type="evidence" value="ECO:0007669"/>
    <property type="project" value="UniProtKB-EC"/>
</dbReference>
<dbReference type="GO" id="GO:0002143">
    <property type="term" value="P:tRNA wobble position uridine thiolation"/>
    <property type="evidence" value="ECO:0007669"/>
    <property type="project" value="TreeGrafter"/>
</dbReference>
<dbReference type="CDD" id="cd01998">
    <property type="entry name" value="MnmA_TRMU-like"/>
    <property type="match status" value="1"/>
</dbReference>
<dbReference type="FunFam" id="2.30.30.280:FF:000001">
    <property type="entry name" value="tRNA-specific 2-thiouridylase MnmA"/>
    <property type="match status" value="1"/>
</dbReference>
<dbReference type="FunFam" id="3.40.50.620:FF:000115">
    <property type="entry name" value="tRNA-specific 2-thiouridylase MnmA"/>
    <property type="match status" value="1"/>
</dbReference>
<dbReference type="Gene3D" id="2.30.30.280">
    <property type="entry name" value="Adenine nucleotide alpha hydrolases-like domains"/>
    <property type="match status" value="1"/>
</dbReference>
<dbReference type="Gene3D" id="3.40.50.620">
    <property type="entry name" value="HUPs"/>
    <property type="match status" value="1"/>
</dbReference>
<dbReference type="Gene3D" id="2.40.30.10">
    <property type="entry name" value="Translation factors"/>
    <property type="match status" value="1"/>
</dbReference>
<dbReference type="HAMAP" id="MF_00144">
    <property type="entry name" value="tRNA_thiouridyl_MnmA"/>
    <property type="match status" value="1"/>
</dbReference>
<dbReference type="InterPro" id="IPR004506">
    <property type="entry name" value="MnmA-like"/>
</dbReference>
<dbReference type="InterPro" id="IPR046885">
    <property type="entry name" value="MnmA-like_C"/>
</dbReference>
<dbReference type="InterPro" id="IPR046884">
    <property type="entry name" value="MnmA-like_central"/>
</dbReference>
<dbReference type="InterPro" id="IPR023382">
    <property type="entry name" value="MnmA-like_central_sf"/>
</dbReference>
<dbReference type="InterPro" id="IPR014729">
    <property type="entry name" value="Rossmann-like_a/b/a_fold"/>
</dbReference>
<dbReference type="NCBIfam" id="NF001138">
    <property type="entry name" value="PRK00143.1"/>
    <property type="match status" value="1"/>
</dbReference>
<dbReference type="NCBIfam" id="TIGR00420">
    <property type="entry name" value="trmU"/>
    <property type="match status" value="1"/>
</dbReference>
<dbReference type="PANTHER" id="PTHR11933:SF5">
    <property type="entry name" value="MITOCHONDRIAL TRNA-SPECIFIC 2-THIOURIDYLASE 1"/>
    <property type="match status" value="1"/>
</dbReference>
<dbReference type="PANTHER" id="PTHR11933">
    <property type="entry name" value="TRNA 5-METHYLAMINOMETHYL-2-THIOURIDYLATE -METHYLTRANSFERASE"/>
    <property type="match status" value="1"/>
</dbReference>
<dbReference type="Pfam" id="PF03054">
    <property type="entry name" value="tRNA_Me_trans"/>
    <property type="match status" value="1"/>
</dbReference>
<dbReference type="Pfam" id="PF20258">
    <property type="entry name" value="tRNA_Me_trans_C"/>
    <property type="match status" value="1"/>
</dbReference>
<dbReference type="Pfam" id="PF20259">
    <property type="entry name" value="tRNA_Me_trans_M"/>
    <property type="match status" value="1"/>
</dbReference>
<dbReference type="SUPFAM" id="SSF52402">
    <property type="entry name" value="Adenine nucleotide alpha hydrolases-like"/>
    <property type="match status" value="1"/>
</dbReference>
<accession>B9KR64</accession>
<gene>
    <name evidence="1" type="primary">mnmA</name>
    <name type="ordered locus">RSKD131_0931</name>
</gene>
<reference key="1">
    <citation type="journal article" date="2009" name="J. Bacteriol.">
        <title>Complete genome sequence of Rhodobacter sphaeroides KD131.</title>
        <authorList>
            <person name="Lim S.-K."/>
            <person name="Kim S.J."/>
            <person name="Cha S.H."/>
            <person name="Oh Y.-K."/>
            <person name="Rhee H.-J."/>
            <person name="Kim M.-S."/>
            <person name="Lee J.K."/>
        </authorList>
    </citation>
    <scope>NUCLEOTIDE SEQUENCE [LARGE SCALE GENOMIC DNA]</scope>
    <source>
        <strain>KD131 / KCTC 12085</strain>
    </source>
</reference>
<feature type="chain" id="PRO_1000198623" description="tRNA-specific 2-thiouridylase MnmA">
    <location>
        <begin position="1"/>
        <end position="379"/>
    </location>
</feature>
<feature type="region of interest" description="Interaction with tRNA" evidence="1">
    <location>
        <begin position="163"/>
        <end position="165"/>
    </location>
</feature>
<feature type="active site" description="Nucleophile" evidence="1">
    <location>
        <position position="117"/>
    </location>
</feature>
<feature type="active site" description="Cysteine persulfide intermediate" evidence="1">
    <location>
        <position position="214"/>
    </location>
</feature>
<feature type="binding site" evidence="1">
    <location>
        <begin position="23"/>
        <end position="30"/>
    </location>
    <ligand>
        <name>ATP</name>
        <dbReference type="ChEBI" id="CHEBI:30616"/>
    </ligand>
</feature>
<feature type="binding site" evidence="1">
    <location>
        <position position="49"/>
    </location>
    <ligand>
        <name>ATP</name>
        <dbReference type="ChEBI" id="CHEBI:30616"/>
    </ligand>
</feature>
<feature type="binding site" evidence="1">
    <location>
        <position position="141"/>
    </location>
    <ligand>
        <name>ATP</name>
        <dbReference type="ChEBI" id="CHEBI:30616"/>
    </ligand>
</feature>
<feature type="site" description="Interaction with tRNA" evidence="1">
    <location>
        <position position="142"/>
    </location>
</feature>
<feature type="site" description="Interaction with tRNA" evidence="1">
    <location>
        <position position="356"/>
    </location>
</feature>
<feature type="disulfide bond" description="Alternate" evidence="1">
    <location>
        <begin position="117"/>
        <end position="214"/>
    </location>
</feature>
<proteinExistence type="inferred from homology"/>
<evidence type="ECO:0000255" key="1">
    <source>
        <dbReference type="HAMAP-Rule" id="MF_00144"/>
    </source>
</evidence>
<sequence length="379" mass="40961">MLDHPLNSLGFAKPPAATRVVVAMSGGVDSSVVAAELAAEGYDVVGVTLQLYDHGAALAKKGACCAGRDIHDARRVAETMGFPHYVLDYENTFREAVIDEFADAYLAGATPVPCIRCNERVKFKDLLQTAKDLDADCMATGHYIQRKMGPAGPELHCAADPARDQSYFLFSTTPEQLAFLRFPLGHLASKAETRALAARHGLPVADKPDSQDICFVPNGNYAEVIQKLRPGAADPGEIVDLSGRVLGEHRGVIHYTIGQRRGLGIGGLGDPLYVVRLDPERRQVIVGPKEALSTRIVPVREINWLGDAPLTSRSEWQVMAKVRSTRASREAVIRPLSDTEAEVELIAPEDGVSPGQACVFYAPGDSRILGGGWIWRGAR</sequence>
<organism>
    <name type="scientific">Cereibacter sphaeroides (strain KD131 / KCTC 12085)</name>
    <name type="common">Rhodobacter sphaeroides</name>
    <dbReference type="NCBI Taxonomy" id="557760"/>
    <lineage>
        <taxon>Bacteria</taxon>
        <taxon>Pseudomonadati</taxon>
        <taxon>Pseudomonadota</taxon>
        <taxon>Alphaproteobacteria</taxon>
        <taxon>Rhodobacterales</taxon>
        <taxon>Paracoccaceae</taxon>
        <taxon>Cereibacter</taxon>
    </lineage>
</organism>